<reference key="1">
    <citation type="journal article" date="2005" name="Genomics">
        <title>Trace amine-associated receptors form structurally and functionally distinct subfamilies of novel G protein-coupled receptors.</title>
        <authorList>
            <person name="Lindemann L."/>
            <person name="Ebeling M."/>
            <person name="Kratochwil N.A."/>
            <person name="Bunzow J.R."/>
            <person name="Grandy D.K."/>
            <person name="Hoener M.C."/>
        </authorList>
    </citation>
    <scope>NUCLEOTIDE SEQUENCE [GENOMIC DNA]</scope>
    <source>
        <strain>C57BL/6J</strain>
    </source>
</reference>
<reference key="2">
    <citation type="journal article" date="2006" name="Nature">
        <title>A second class of chemosensory receptors in the olfactory epithelium.</title>
        <authorList>
            <person name="Liberles S.D."/>
            <person name="Buck L.B."/>
        </authorList>
    </citation>
    <scope>TISSUE SPECIFICITY</scope>
</reference>
<reference key="3">
    <citation type="journal article" date="2012" name="ACS Chem. Biol.">
        <title>Agonists for 13 trace amine-associated receptors provide insight into the molecular basis of odor selectivity.</title>
        <authorList>
            <person name="Ferrero D.M."/>
            <person name="Wacker D."/>
            <person name="Roque M.A."/>
            <person name="Baldwin M.W."/>
            <person name="Stevens R.C."/>
            <person name="Liberles S.D."/>
        </authorList>
    </citation>
    <scope>FUNCTION</scope>
</reference>
<reference key="4">
    <citation type="journal article" date="2013" name="Nature">
        <title>Non-redundant coding of aversive odours in the main olfactory pathway.</title>
        <authorList>
            <person name="Dewan A."/>
            <person name="Pacifico R."/>
            <person name="Zhan R."/>
            <person name="Rinberg D."/>
            <person name="Bozza T."/>
        </authorList>
    </citation>
    <scope>DISRUPTION PHENOTYPE</scope>
</reference>
<sequence length="358" mass="40163">MATGDDSFLWDQDSILSRDLFSATSAELCYENLNRSCVRSPYSPGPRLILYAVFGFGAVLAVCGNLLVMTSILHFRQLHSPANFLVASLACADFLVGLTVMPFSTVRSVEGCWYFGEIYCKLHTCFDVSFCSSSIFHLCFISVDRYIAVSDPLIYPTRFTASVSNKCITFSWLLSISYGFSLIYTGASEAGLEDLVSALTCVGGCQLAVNQSWVFINFLLFLIPTLVMITVYSKIFLIAKQQAQNIEKMSKQTARASDSYKDRVAKRERKAAKTLGIAVAAFLLSWLPYFIDSFIDAFLGFITPTYVYEILVWIAYYNSAMNPLIYAFFYPWFRKAIKLTVTGKILRENSSTTNLFPE</sequence>
<proteinExistence type="evidence at transcript level"/>
<name>TAA7E_MOUSE</name>
<organism>
    <name type="scientific">Mus musculus</name>
    <name type="common">Mouse</name>
    <dbReference type="NCBI Taxonomy" id="10090"/>
    <lineage>
        <taxon>Eukaryota</taxon>
        <taxon>Metazoa</taxon>
        <taxon>Chordata</taxon>
        <taxon>Craniata</taxon>
        <taxon>Vertebrata</taxon>
        <taxon>Euteleostomi</taxon>
        <taxon>Mammalia</taxon>
        <taxon>Eutheria</taxon>
        <taxon>Euarchontoglires</taxon>
        <taxon>Glires</taxon>
        <taxon>Rodentia</taxon>
        <taxon>Myomorpha</taxon>
        <taxon>Muroidea</taxon>
        <taxon>Muridae</taxon>
        <taxon>Murinae</taxon>
        <taxon>Mus</taxon>
        <taxon>Mus</taxon>
    </lineage>
</organism>
<protein>
    <recommendedName>
        <fullName evidence="9">Trace amine-associated receptor 7e</fullName>
        <shortName evidence="8">TaR-7e</shortName>
        <shortName evidence="8">Trace amine receptor 7e</shortName>
        <shortName evidence="9">mTaar7e</shortName>
    </recommendedName>
</protein>
<evidence type="ECO:0000250" key="1">
    <source>
        <dbReference type="UniProtKB" id="Q5QD04"/>
    </source>
</evidence>
<evidence type="ECO:0000250" key="2">
    <source>
        <dbReference type="UniProtKB" id="Q923X5"/>
    </source>
</evidence>
<evidence type="ECO:0000255" key="3"/>
<evidence type="ECO:0000255" key="4">
    <source>
        <dbReference type="PROSITE-ProRule" id="PRU00521"/>
    </source>
</evidence>
<evidence type="ECO:0000269" key="5">
    <source>
    </source>
</evidence>
<evidence type="ECO:0000269" key="6">
    <source>
    </source>
</evidence>
<evidence type="ECO:0000269" key="7">
    <source>
    </source>
</evidence>
<evidence type="ECO:0000303" key="8">
    <source>
    </source>
</evidence>
<evidence type="ECO:0000303" key="9">
    <source>
    </source>
</evidence>
<evidence type="ECO:0000305" key="10"/>
<evidence type="ECO:0000312" key="11">
    <source>
        <dbReference type="MGI" id="MGI:3527445"/>
    </source>
</evidence>
<accession>Q5QD09</accession>
<feature type="chain" id="PRO_0000070169" description="Trace amine-associated receptor 7e">
    <location>
        <begin position="1"/>
        <end position="358"/>
    </location>
</feature>
<feature type="topological domain" description="Extracellular" evidence="3">
    <location>
        <begin position="1"/>
        <end position="47"/>
    </location>
</feature>
<feature type="transmembrane region" description="Helical; Name=1" evidence="3">
    <location>
        <begin position="48"/>
        <end position="68"/>
    </location>
</feature>
<feature type="topological domain" description="Cytoplasmic" evidence="3">
    <location>
        <begin position="69"/>
        <end position="83"/>
    </location>
</feature>
<feature type="transmembrane region" description="Helical; Name=2" evidence="3">
    <location>
        <begin position="84"/>
        <end position="104"/>
    </location>
</feature>
<feature type="topological domain" description="Extracellular" evidence="3">
    <location>
        <begin position="105"/>
        <end position="121"/>
    </location>
</feature>
<feature type="transmembrane region" description="Helical; Name=3" evidence="3">
    <location>
        <begin position="122"/>
        <end position="143"/>
    </location>
</feature>
<feature type="topological domain" description="Cytoplasmic" evidence="3">
    <location>
        <begin position="144"/>
        <end position="166"/>
    </location>
</feature>
<feature type="transmembrane region" description="Helical; Name=4" evidence="3">
    <location>
        <begin position="167"/>
        <end position="187"/>
    </location>
</feature>
<feature type="topological domain" description="Extracellular" evidence="3">
    <location>
        <begin position="188"/>
        <end position="212"/>
    </location>
</feature>
<feature type="transmembrane region" description="Helical; Name=5" evidence="3">
    <location>
        <begin position="213"/>
        <end position="233"/>
    </location>
</feature>
<feature type="topological domain" description="Cytoplasmic" evidence="3">
    <location>
        <begin position="234"/>
        <end position="274"/>
    </location>
</feature>
<feature type="transmembrane region" description="Helical; Name=6" evidence="3">
    <location>
        <begin position="275"/>
        <end position="295"/>
    </location>
</feature>
<feature type="topological domain" description="Extracellular" evidence="3">
    <location>
        <begin position="296"/>
        <end position="309"/>
    </location>
</feature>
<feature type="transmembrane region" description="Helical; Name=7" evidence="3">
    <location>
        <begin position="310"/>
        <end position="333"/>
    </location>
</feature>
<feature type="topological domain" description="Cytoplasmic" evidence="3">
    <location>
        <begin position="334"/>
        <end position="358"/>
    </location>
</feature>
<feature type="glycosylation site" description="N-linked (GlcNAc...) asparagine" evidence="3">
    <location>
        <position position="34"/>
    </location>
</feature>
<feature type="glycosylation site" description="N-linked (GlcNAc...) asparagine" evidence="3">
    <location>
        <position position="210"/>
    </location>
</feature>
<feature type="disulfide bond" evidence="1">
    <location>
        <begin position="37"/>
        <end position="201"/>
    </location>
</feature>
<feature type="disulfide bond" evidence="4">
    <location>
        <begin position="120"/>
        <end position="205"/>
    </location>
</feature>
<keyword id="KW-1003">Cell membrane</keyword>
<keyword id="KW-1015">Disulfide bond</keyword>
<keyword id="KW-0297">G-protein coupled receptor</keyword>
<keyword id="KW-0325">Glycoprotein</keyword>
<keyword id="KW-0472">Membrane</keyword>
<keyword id="KW-0675">Receptor</keyword>
<keyword id="KW-1185">Reference proteome</keyword>
<keyword id="KW-0807">Transducer</keyword>
<keyword id="KW-0812">Transmembrane</keyword>
<keyword id="KW-1133">Transmembrane helix</keyword>
<dbReference type="EMBL" id="AY702335">
    <property type="protein sequence ID" value="AAV70144.1"/>
    <property type="molecule type" value="Genomic_DNA"/>
</dbReference>
<dbReference type="CCDS" id="CCDS23743.1"/>
<dbReference type="RefSeq" id="NP_001010835.1">
    <property type="nucleotide sequence ID" value="NM_001010835.1"/>
</dbReference>
<dbReference type="SMR" id="Q5QD09"/>
<dbReference type="FunCoup" id="Q5QD09">
    <property type="interactions" value="564"/>
</dbReference>
<dbReference type="STRING" id="10090.ENSMUSP00000090326"/>
<dbReference type="GlyCosmos" id="Q5QD09">
    <property type="glycosylation" value="2 sites, No reported glycans"/>
</dbReference>
<dbReference type="GlyGen" id="Q5QD09">
    <property type="glycosylation" value="2 sites"/>
</dbReference>
<dbReference type="PaxDb" id="10090-ENSMUSP00000090326"/>
<dbReference type="Ensembl" id="ENSMUST00000092656.4">
    <property type="protein sequence ID" value="ENSMUSP00000090326.3"/>
    <property type="gene ID" value="ENSMUSG00000100689.2"/>
</dbReference>
<dbReference type="GeneID" id="276742"/>
<dbReference type="KEGG" id="mmu:276742"/>
<dbReference type="UCSC" id="uc007eqm.1">
    <property type="organism name" value="mouse"/>
</dbReference>
<dbReference type="AGR" id="MGI:3527445"/>
<dbReference type="CTD" id="276742"/>
<dbReference type="MGI" id="MGI:3527445">
    <property type="gene designation" value="Taar7e"/>
</dbReference>
<dbReference type="VEuPathDB" id="HostDB:ENSMUSG00000100689"/>
<dbReference type="eggNOG" id="KOG3656">
    <property type="taxonomic scope" value="Eukaryota"/>
</dbReference>
<dbReference type="GeneTree" id="ENSGT00940000160273"/>
<dbReference type="HOGENOM" id="CLU_009579_11_0_1"/>
<dbReference type="InParanoid" id="Q5QD09"/>
<dbReference type="OMA" id="VPVNQNW"/>
<dbReference type="OrthoDB" id="5959645at2759"/>
<dbReference type="PhylomeDB" id="Q5QD09"/>
<dbReference type="TreeFam" id="TF343107"/>
<dbReference type="BioGRID-ORCS" id="276742">
    <property type="hits" value="2 hits in 46 CRISPR screens"/>
</dbReference>
<dbReference type="PRO" id="PR:Q5QD09"/>
<dbReference type="Proteomes" id="UP000000589">
    <property type="component" value="Chromosome 10"/>
</dbReference>
<dbReference type="RNAct" id="Q5QD09">
    <property type="molecule type" value="protein"/>
</dbReference>
<dbReference type="ExpressionAtlas" id="Q5QD09">
    <property type="expression patterns" value="baseline and differential"/>
</dbReference>
<dbReference type="GO" id="GO:0005886">
    <property type="term" value="C:plasma membrane"/>
    <property type="evidence" value="ECO:0007669"/>
    <property type="project" value="UniProtKB-SubCell"/>
</dbReference>
<dbReference type="GO" id="GO:0001594">
    <property type="term" value="F:trace-amine receptor activity"/>
    <property type="evidence" value="ECO:0000314"/>
    <property type="project" value="UniProtKB"/>
</dbReference>
<dbReference type="FunFam" id="1.20.1070.10:FF:000030">
    <property type="entry name" value="trace amine-associated receptor 1"/>
    <property type="match status" value="1"/>
</dbReference>
<dbReference type="Gene3D" id="1.20.1070.10">
    <property type="entry name" value="Rhodopsin 7-helix transmembrane proteins"/>
    <property type="match status" value="1"/>
</dbReference>
<dbReference type="InterPro" id="IPR000276">
    <property type="entry name" value="GPCR_Rhodpsn"/>
</dbReference>
<dbReference type="InterPro" id="IPR017452">
    <property type="entry name" value="GPCR_Rhodpsn_7TM"/>
</dbReference>
<dbReference type="InterPro" id="IPR050569">
    <property type="entry name" value="TAAR"/>
</dbReference>
<dbReference type="InterPro" id="IPR009132">
    <property type="entry name" value="TAAR_fam"/>
</dbReference>
<dbReference type="PANTHER" id="PTHR24249">
    <property type="entry name" value="HISTAMINE RECEPTOR-RELATED G-PROTEIN COUPLED RECEPTOR"/>
    <property type="match status" value="1"/>
</dbReference>
<dbReference type="PANTHER" id="PTHR24249:SF78">
    <property type="entry name" value="TRACE AMINE-ASSOCIATED RECEPTOR 7A-RELATED"/>
    <property type="match status" value="1"/>
</dbReference>
<dbReference type="Pfam" id="PF00001">
    <property type="entry name" value="7tm_1"/>
    <property type="match status" value="1"/>
</dbReference>
<dbReference type="PRINTS" id="PR00237">
    <property type="entry name" value="GPCRRHODOPSN"/>
</dbReference>
<dbReference type="PRINTS" id="PR01830">
    <property type="entry name" value="TRACEAMINER"/>
</dbReference>
<dbReference type="SMART" id="SM01381">
    <property type="entry name" value="7TM_GPCR_Srsx"/>
    <property type="match status" value="1"/>
</dbReference>
<dbReference type="SUPFAM" id="SSF81321">
    <property type="entry name" value="Family A G protein-coupled receptor-like"/>
    <property type="match status" value="1"/>
</dbReference>
<dbReference type="PROSITE" id="PS00237">
    <property type="entry name" value="G_PROTEIN_RECEP_F1_1"/>
    <property type="match status" value="1"/>
</dbReference>
<dbReference type="PROSITE" id="PS50262">
    <property type="entry name" value="G_PROTEIN_RECEP_F1_2"/>
    <property type="match status" value="1"/>
</dbReference>
<comment type="function">
    <text evidence="6 10">Olfactory receptor specific for N,N-dimethylalkylamines trace amines (PubMed:22545963). Trace amine compounds are enriched in animal body fluids and act on trace amine-associated receptors (TAARs) to elicit both intraspecific and interspecific innate behaviors (PubMed:22545963). Ligand-binding causes a conformation change that triggers signaling via G(s)-class of G alpha proteins (GNAL or GNAS) (Probable).</text>
</comment>
<comment type="subcellular location">
    <subcellularLocation>
        <location evidence="2">Cell membrane</location>
        <topology evidence="3">Multi-pass membrane protein</topology>
    </subcellularLocation>
</comment>
<comment type="tissue specificity">
    <text evidence="5">Specifically expressed in neurons of the olfactory epithelium.</text>
</comment>
<comment type="domain">
    <text evidence="1">In addition to the well known disulfide bond common to G-protein coupled receptor 1 family, trace amine-associated receptors (TAARs) contain an unique disulfide bond (Cys-37-Cys-201) connecting the N-terminus to the extracellular Loop 2 (ECL2), which is required for agonist-induced receptor activation.</text>
</comment>
<comment type="disruption phenotype">
    <text evidence="7">Mice lacking Taar2, Taar3, Taar4, Taar5, Taar6, Taar7a, Taar7b, Taar7d, Taar7e, Taar7f, Taar8a, Taar8b, Taar8c and Taar9 show no visible phenotype or behavioral deficits. They however show an absence of aversion to low concentrations of amines such as 2-phenylethylamine, isopentylamine, N-methylpiperidine and cadaverine.</text>
</comment>
<comment type="similarity">
    <text evidence="4">Belongs to the G-protein coupled receptor 1 family.</text>
</comment>
<gene>
    <name evidence="9 11" type="primary">Taar7e</name>
    <name evidence="11" type="synonym">Gm697</name>
</gene>